<reference key="1">
    <citation type="submission" date="2007-06" db="EMBL/GenBank/DDBJ databases">
        <title>Complete sequence of Methanococcus aeolicus Nankai-3.</title>
        <authorList>
            <consortium name="US DOE Joint Genome Institute"/>
            <person name="Copeland A."/>
            <person name="Lucas S."/>
            <person name="Lapidus A."/>
            <person name="Barry K."/>
            <person name="Glavina del Rio T."/>
            <person name="Dalin E."/>
            <person name="Tice H."/>
            <person name="Pitluck S."/>
            <person name="Chain P."/>
            <person name="Malfatti S."/>
            <person name="Shin M."/>
            <person name="Vergez L."/>
            <person name="Schmutz J."/>
            <person name="Larimer F."/>
            <person name="Land M."/>
            <person name="Hauser L."/>
            <person name="Kyrpides N."/>
            <person name="Lykidis A."/>
            <person name="Sieprawska-Lupa M."/>
            <person name="Whitman W.B."/>
            <person name="Richardson P."/>
        </authorList>
    </citation>
    <scope>NUCLEOTIDE SEQUENCE [LARGE SCALE GENOMIC DNA]</scope>
    <source>
        <strain>ATCC BAA-1280 / DSM 17508 / OCM 812 / Nankai-3</strain>
    </source>
</reference>
<accession>A6UV59</accession>
<name>THI4_META3</name>
<sequence length="263" mass="27667">MDISKIDLKADEKAVTKSIFKATYEMWMDNLEVDVVIVGGGPSGLTAGRYLADAGVKVLILERHLSFGGGTWGGGMGCPYITVQSPADEILSEVGIKLEEGEDGLFVADSVEVPAKLGTGAIDAGAKVLTGIVVEDVILKEGKVSGVVINSYAINKAGLHIDPLTINAKYVIDATGHDASVACTLARKNEDLGLVIPGEKSLWADEGENGLLKYTKELFPGLFVCGMASNATHGGYRMGAVFGGMYISGKIVADMILEKLKNE</sequence>
<dbReference type="EC" id="2.4.2.59" evidence="1"/>
<dbReference type="EMBL" id="CP000743">
    <property type="protein sequence ID" value="ABR56381.1"/>
    <property type="molecule type" value="Genomic_DNA"/>
</dbReference>
<dbReference type="RefSeq" id="WP_011973513.1">
    <property type="nucleotide sequence ID" value="NC_009635.1"/>
</dbReference>
<dbReference type="SMR" id="A6UV59"/>
<dbReference type="STRING" id="419665.Maeo_0798"/>
<dbReference type="GeneID" id="5327057"/>
<dbReference type="KEGG" id="mae:Maeo_0798"/>
<dbReference type="eggNOG" id="arCOG00574">
    <property type="taxonomic scope" value="Archaea"/>
</dbReference>
<dbReference type="HOGENOM" id="CLU_053727_2_0_2"/>
<dbReference type="UniPathway" id="UPA00060"/>
<dbReference type="Proteomes" id="UP000001106">
    <property type="component" value="Chromosome"/>
</dbReference>
<dbReference type="GO" id="GO:0005506">
    <property type="term" value="F:iron ion binding"/>
    <property type="evidence" value="ECO:0007669"/>
    <property type="project" value="UniProtKB-UniRule"/>
</dbReference>
<dbReference type="GO" id="GO:0016763">
    <property type="term" value="F:pentosyltransferase activity"/>
    <property type="evidence" value="ECO:0007669"/>
    <property type="project" value="UniProtKB-UniRule"/>
</dbReference>
<dbReference type="GO" id="GO:0009228">
    <property type="term" value="P:thiamine biosynthetic process"/>
    <property type="evidence" value="ECO:0007669"/>
    <property type="project" value="UniProtKB-KW"/>
</dbReference>
<dbReference type="GO" id="GO:0009229">
    <property type="term" value="P:thiamine diphosphate biosynthetic process"/>
    <property type="evidence" value="ECO:0007669"/>
    <property type="project" value="UniProtKB-UniRule"/>
</dbReference>
<dbReference type="GO" id="GO:0052837">
    <property type="term" value="P:thiazole biosynthetic process"/>
    <property type="evidence" value="ECO:0007669"/>
    <property type="project" value="UniProtKB-UniRule"/>
</dbReference>
<dbReference type="Gene3D" id="3.50.50.60">
    <property type="entry name" value="FAD/NAD(P)-binding domain"/>
    <property type="match status" value="1"/>
</dbReference>
<dbReference type="HAMAP" id="MF_00304">
    <property type="entry name" value="Thi4"/>
    <property type="match status" value="1"/>
</dbReference>
<dbReference type="InterPro" id="IPR036188">
    <property type="entry name" value="FAD/NAD-bd_sf"/>
</dbReference>
<dbReference type="InterPro" id="IPR002922">
    <property type="entry name" value="Thi4_fam"/>
</dbReference>
<dbReference type="InterPro" id="IPR022828">
    <property type="entry name" value="Thi4_prok"/>
</dbReference>
<dbReference type="NCBIfam" id="TIGR00292">
    <property type="entry name" value="sulfide-dependent adenosine diphosphate thiazole synthase"/>
    <property type="match status" value="1"/>
</dbReference>
<dbReference type="PANTHER" id="PTHR43422">
    <property type="entry name" value="THIAMINE THIAZOLE SYNTHASE"/>
    <property type="match status" value="1"/>
</dbReference>
<dbReference type="PANTHER" id="PTHR43422:SF3">
    <property type="entry name" value="THIAMINE THIAZOLE SYNTHASE"/>
    <property type="match status" value="1"/>
</dbReference>
<dbReference type="Pfam" id="PF01946">
    <property type="entry name" value="Thi4"/>
    <property type="match status" value="1"/>
</dbReference>
<dbReference type="PRINTS" id="PR00420">
    <property type="entry name" value="RNGMNOXGNASE"/>
</dbReference>
<dbReference type="SUPFAM" id="SSF51905">
    <property type="entry name" value="FAD/NAD(P)-binding domain"/>
    <property type="match status" value="1"/>
</dbReference>
<keyword id="KW-0408">Iron</keyword>
<keyword id="KW-0479">Metal-binding</keyword>
<keyword id="KW-0520">NAD</keyword>
<keyword id="KW-0784">Thiamine biosynthesis</keyword>
<keyword id="KW-0808">Transferase</keyword>
<proteinExistence type="inferred from homology"/>
<protein>
    <recommendedName>
        <fullName evidence="1">Thiamine thiazole synthase</fullName>
        <ecNumber evidence="1">2.4.2.59</ecNumber>
    </recommendedName>
</protein>
<organism>
    <name type="scientific">Methanococcus aeolicus (strain ATCC BAA-1280 / DSM 17508 / OCM 812 / Nankai-3)</name>
    <dbReference type="NCBI Taxonomy" id="419665"/>
    <lineage>
        <taxon>Archaea</taxon>
        <taxon>Methanobacteriati</taxon>
        <taxon>Methanobacteriota</taxon>
        <taxon>Methanomada group</taxon>
        <taxon>Methanococci</taxon>
        <taxon>Methanococcales</taxon>
        <taxon>Methanococcaceae</taxon>
        <taxon>Methanococcus</taxon>
    </lineage>
</organism>
<comment type="function">
    <text evidence="1">Involved in the biosynthesis of the thiazole moiety of thiamine. Catalyzes the conversion of NAD and glycine to adenosine diphosphate 5-(2-hydroxyethyl)-4-methylthiazole-2-carboxylate (ADT), an adenylated thiazole intermediate, using free sulfide as a source of sulfur.</text>
</comment>
<comment type="catalytic activity">
    <reaction evidence="1">
        <text>hydrogen sulfide + glycine + NAD(+) = ADP-5-ethyl-4-methylthiazole-2-carboxylate + nicotinamide + 3 H2O + H(+)</text>
        <dbReference type="Rhea" id="RHEA:55704"/>
        <dbReference type="ChEBI" id="CHEBI:15377"/>
        <dbReference type="ChEBI" id="CHEBI:15378"/>
        <dbReference type="ChEBI" id="CHEBI:17154"/>
        <dbReference type="ChEBI" id="CHEBI:29919"/>
        <dbReference type="ChEBI" id="CHEBI:57305"/>
        <dbReference type="ChEBI" id="CHEBI:57540"/>
        <dbReference type="ChEBI" id="CHEBI:139151"/>
        <dbReference type="EC" id="2.4.2.59"/>
    </reaction>
</comment>
<comment type="cofactor">
    <cofactor evidence="1">
        <name>Fe(2+)</name>
        <dbReference type="ChEBI" id="CHEBI:29033"/>
    </cofactor>
</comment>
<comment type="pathway">
    <text evidence="1">Cofactor biosynthesis; thiamine diphosphate biosynthesis.</text>
</comment>
<comment type="subunit">
    <text evidence="1">Homooctamer; tetramer of dimers.</text>
</comment>
<comment type="similarity">
    <text evidence="1">Belongs to the THI4 family.</text>
</comment>
<gene>
    <name evidence="1" type="primary">thi4</name>
    <name type="ordered locus">Maeo_0798</name>
</gene>
<feature type="chain" id="PRO_1000196829" description="Thiamine thiazole synthase">
    <location>
        <begin position="1"/>
        <end position="263"/>
    </location>
</feature>
<feature type="binding site" description="in other chain" evidence="1">
    <location>
        <position position="43"/>
    </location>
    <ligand>
        <name>NAD(+)</name>
        <dbReference type="ChEBI" id="CHEBI:57540"/>
        <note>ligand shared between two adjacent protomers</note>
    </ligand>
</feature>
<feature type="binding site" description="in other chain" evidence="1">
    <location>
        <begin position="62"/>
        <end position="63"/>
    </location>
    <ligand>
        <name>NAD(+)</name>
        <dbReference type="ChEBI" id="CHEBI:57540"/>
        <note>ligand shared between two adjacent protomers</note>
    </ligand>
</feature>
<feature type="binding site" description="in other chain" evidence="1">
    <location>
        <position position="70"/>
    </location>
    <ligand>
        <name>NAD(+)</name>
        <dbReference type="ChEBI" id="CHEBI:57540"/>
        <note>ligand shared between two adjacent protomers</note>
    </ligand>
</feature>
<feature type="binding site" description="in other chain" evidence="1">
    <location>
        <position position="134"/>
    </location>
    <ligand>
        <name>NAD(+)</name>
        <dbReference type="ChEBI" id="CHEBI:57540"/>
        <note>ligand shared between two adjacent protomers</note>
    </ligand>
</feature>
<feature type="binding site" evidence="1">
    <location>
        <begin position="160"/>
        <end position="162"/>
    </location>
    <ligand>
        <name>NAD(+)</name>
        <dbReference type="ChEBI" id="CHEBI:57540"/>
        <note>ligand shared between two adjacent protomers</note>
    </ligand>
</feature>
<feature type="binding site" evidence="1">
    <location>
        <position position="162"/>
    </location>
    <ligand>
        <name>Fe cation</name>
        <dbReference type="ChEBI" id="CHEBI:24875"/>
        <note>ligand shared between two adjacent protomers</note>
    </ligand>
</feature>
<feature type="binding site" description="in other chain" evidence="1">
    <location>
        <position position="177"/>
    </location>
    <ligand>
        <name>Fe cation</name>
        <dbReference type="ChEBI" id="CHEBI:24875"/>
        <note>ligand shared between two adjacent protomers</note>
    </ligand>
</feature>
<feature type="binding site" description="in other chain" evidence="1">
    <location>
        <position position="180"/>
    </location>
    <ligand>
        <name>NAD(+)</name>
        <dbReference type="ChEBI" id="CHEBI:57540"/>
        <note>ligand shared between two adjacent protomers</note>
    </ligand>
</feature>
<feature type="binding site" description="in other chain" evidence="1">
    <location>
        <position position="227"/>
    </location>
    <ligand>
        <name>NAD(+)</name>
        <dbReference type="ChEBI" id="CHEBI:57540"/>
        <note>ligand shared between two adjacent protomers</note>
    </ligand>
</feature>
<feature type="binding site" evidence="1">
    <location>
        <position position="237"/>
    </location>
    <ligand>
        <name>glycine</name>
        <dbReference type="ChEBI" id="CHEBI:57305"/>
    </ligand>
</feature>
<evidence type="ECO:0000255" key="1">
    <source>
        <dbReference type="HAMAP-Rule" id="MF_00304"/>
    </source>
</evidence>